<sequence>MDAGSSRSLENAVNKIYHDQLVPKINTSKKMSTLAHPPNILEMPQEIKKNCGGKQVEITLERIKMTKSIKEKQSNDLEKAAFKRKAEGEEKPTRKKEAKIIELDNQLITMPLPHIPLKNIMDVEMKLVYIDEVGVRYEFVESFMSTGSQPTCRVAEIVDPLSVPNFSFLPQIDKWLQVALKDASSCYRQKKYALAAGQFRTALELCSKGAVLEEPFDASAEDIASVASFIETKLVTCYLRMRKPDLALNHAHRSIVLNPAYFRNHLRQATVFRCLERYSEAARSAMIADYMFWLGGGREQSISKLIKLYWQAMIEEAITRAESFSVMYTPFATKIRADKIEKVKDVFTKTHPAYAEYIYTDLQTLHMLPQTVDWSSFPPQQYLLTLGFKNKEDGKFLEKISSRKLPIFTEHKTPFGLTREDTVRQMETMGKRILPILDFIRSTQLNGSFPASSGVMEKLQYAGLLSQLQRVKEQSQVINQAMAELATIPYLRDISQQEAELLQSLMADAMDTLEGRRNDNERVWNTIQKVGQIEDFLYQLEDSFLKTKKLRTARRQKTKMKRLQIVQQS</sequence>
<comment type="function">
    <text evidence="1">Essential for spermiogenesis and male fertility (By similarity). Involved in the formation of sperm acrosome during spermatogenesis (By similarity).</text>
</comment>
<comment type="subcellular location">
    <subcellularLocation>
        <location evidence="1">Golgi apparatus</location>
    </subcellularLocation>
    <subcellularLocation>
        <location evidence="1">Cytoplasmic vesicle</location>
        <location evidence="1">Secretory vesicle</location>
        <location evidence="1">Acrosome</location>
    </subcellularLocation>
    <text evidence="1">Shift from Golgi to sperm acrosome.</text>
</comment>
<comment type="similarity">
    <text evidence="2">Belongs to the SPATA16 family.</text>
</comment>
<protein>
    <recommendedName>
        <fullName>Spermatogenesis-associated protein 16</fullName>
    </recommendedName>
</protein>
<keyword id="KW-0968">Cytoplasmic vesicle</keyword>
<keyword id="KW-0217">Developmental protein</keyword>
<keyword id="KW-0221">Differentiation</keyword>
<keyword id="KW-0333">Golgi apparatus</keyword>
<keyword id="KW-1185">Reference proteome</keyword>
<keyword id="KW-0744">Spermatogenesis</keyword>
<dbReference type="EMBL" id="AB179163">
    <property type="protein sequence ID" value="BAE02214.1"/>
    <property type="molecule type" value="mRNA"/>
</dbReference>
<dbReference type="RefSeq" id="NP_001270675.1">
    <property type="nucleotide sequence ID" value="NM_001283746.1"/>
</dbReference>
<dbReference type="RefSeq" id="XP_045242552.2">
    <property type="nucleotide sequence ID" value="XM_045386617.2"/>
</dbReference>
<dbReference type="RefSeq" id="XP_045242553.2">
    <property type="nucleotide sequence ID" value="XM_045386618.2"/>
</dbReference>
<dbReference type="SMR" id="Q4R3V2"/>
<dbReference type="STRING" id="9541.ENSMFAP00000021310"/>
<dbReference type="GeneID" id="101926490"/>
<dbReference type="eggNOG" id="ENOG502RSQ1">
    <property type="taxonomic scope" value="Eukaryota"/>
</dbReference>
<dbReference type="Proteomes" id="UP000233100">
    <property type="component" value="Unplaced"/>
</dbReference>
<dbReference type="GO" id="GO:0001669">
    <property type="term" value="C:acrosomal vesicle"/>
    <property type="evidence" value="ECO:0007669"/>
    <property type="project" value="UniProtKB-SubCell"/>
</dbReference>
<dbReference type="GO" id="GO:0005794">
    <property type="term" value="C:Golgi apparatus"/>
    <property type="evidence" value="ECO:0007669"/>
    <property type="project" value="UniProtKB-SubCell"/>
</dbReference>
<dbReference type="GO" id="GO:0007286">
    <property type="term" value="P:spermatid development"/>
    <property type="evidence" value="ECO:0000250"/>
    <property type="project" value="UniProtKB"/>
</dbReference>
<dbReference type="FunFam" id="1.25.40.10:FF:000281">
    <property type="entry name" value="Spermatogenesis associated 16"/>
    <property type="match status" value="1"/>
</dbReference>
<dbReference type="Gene3D" id="1.25.40.10">
    <property type="entry name" value="Tetratricopeptide repeat domain"/>
    <property type="match status" value="1"/>
</dbReference>
<dbReference type="InterPro" id="IPR029161">
    <property type="entry name" value="SPATA16"/>
</dbReference>
<dbReference type="InterPro" id="IPR011990">
    <property type="entry name" value="TPR-like_helical_dom_sf"/>
</dbReference>
<dbReference type="PANTHER" id="PTHR47228">
    <property type="entry name" value="SPERMATOGENESIS-ASSOCIATED PROTEIN 16"/>
    <property type="match status" value="1"/>
</dbReference>
<dbReference type="PANTHER" id="PTHR47228:SF1">
    <property type="entry name" value="SPERMATOGENESIS-ASSOCIATED PROTEIN 16"/>
    <property type="match status" value="1"/>
</dbReference>
<dbReference type="Pfam" id="PF15015">
    <property type="entry name" value="NYD-SP12_N"/>
    <property type="match status" value="1"/>
</dbReference>
<dbReference type="SUPFAM" id="SSF48452">
    <property type="entry name" value="TPR-like"/>
    <property type="match status" value="1"/>
</dbReference>
<accession>Q4R3V2</accession>
<name>SPT16_MACFA</name>
<feature type="chain" id="PRO_0000315831" description="Spermatogenesis-associated protein 16">
    <location>
        <begin position="1"/>
        <end position="569"/>
    </location>
</feature>
<organism>
    <name type="scientific">Macaca fascicularis</name>
    <name type="common">Crab-eating macaque</name>
    <name type="synonym">Cynomolgus monkey</name>
    <dbReference type="NCBI Taxonomy" id="9541"/>
    <lineage>
        <taxon>Eukaryota</taxon>
        <taxon>Metazoa</taxon>
        <taxon>Chordata</taxon>
        <taxon>Craniata</taxon>
        <taxon>Vertebrata</taxon>
        <taxon>Euteleostomi</taxon>
        <taxon>Mammalia</taxon>
        <taxon>Eutheria</taxon>
        <taxon>Euarchontoglires</taxon>
        <taxon>Primates</taxon>
        <taxon>Haplorrhini</taxon>
        <taxon>Catarrhini</taxon>
        <taxon>Cercopithecidae</taxon>
        <taxon>Cercopithecinae</taxon>
        <taxon>Macaca</taxon>
    </lineage>
</organism>
<gene>
    <name type="primary">SPATA16</name>
    <name type="ORF">QtsA-13978</name>
</gene>
<evidence type="ECO:0000250" key="1">
    <source>
        <dbReference type="UniProtKB" id="Q8C636"/>
    </source>
</evidence>
<evidence type="ECO:0000305" key="2"/>
<reference key="1">
    <citation type="submission" date="2005-06" db="EMBL/GenBank/DDBJ databases">
        <title>DNA sequences of macaque genes expressed in brain or testis and its evolutionary implications.</title>
        <authorList>
            <consortium name="International consortium for macaque cDNA sequencing and analysis"/>
        </authorList>
    </citation>
    <scope>NUCLEOTIDE SEQUENCE [LARGE SCALE MRNA]</scope>
    <source>
        <tissue>Testis</tissue>
    </source>
</reference>
<proteinExistence type="evidence at transcript level"/>